<evidence type="ECO:0000255" key="1">
    <source>
        <dbReference type="HAMAP-Rule" id="MF_00086"/>
    </source>
</evidence>
<evidence type="ECO:0000305" key="2"/>
<dbReference type="EC" id="2.5.1.6" evidence="1"/>
<dbReference type="EMBL" id="CP000023">
    <property type="protein sequence ID" value="AAV60808.1"/>
    <property type="status" value="ALT_INIT"/>
    <property type="molecule type" value="Genomic_DNA"/>
</dbReference>
<dbReference type="RefSeq" id="WP_011226094.1">
    <property type="nucleotide sequence ID" value="NC_006448.1"/>
</dbReference>
<dbReference type="SMR" id="Q5M434"/>
<dbReference type="STRING" id="264199.stu1172"/>
<dbReference type="GeneID" id="66898965"/>
<dbReference type="KEGG" id="stl:stu1172"/>
<dbReference type="eggNOG" id="COG0192">
    <property type="taxonomic scope" value="Bacteria"/>
</dbReference>
<dbReference type="HOGENOM" id="CLU_041802_1_1_9"/>
<dbReference type="UniPathway" id="UPA00315">
    <property type="reaction ID" value="UER00080"/>
</dbReference>
<dbReference type="Proteomes" id="UP000001170">
    <property type="component" value="Chromosome"/>
</dbReference>
<dbReference type="GO" id="GO:0005737">
    <property type="term" value="C:cytoplasm"/>
    <property type="evidence" value="ECO:0007669"/>
    <property type="project" value="UniProtKB-SubCell"/>
</dbReference>
<dbReference type="GO" id="GO:0005524">
    <property type="term" value="F:ATP binding"/>
    <property type="evidence" value="ECO:0007669"/>
    <property type="project" value="UniProtKB-UniRule"/>
</dbReference>
<dbReference type="GO" id="GO:0000287">
    <property type="term" value="F:magnesium ion binding"/>
    <property type="evidence" value="ECO:0007669"/>
    <property type="project" value="UniProtKB-UniRule"/>
</dbReference>
<dbReference type="GO" id="GO:0004478">
    <property type="term" value="F:methionine adenosyltransferase activity"/>
    <property type="evidence" value="ECO:0007669"/>
    <property type="project" value="UniProtKB-UniRule"/>
</dbReference>
<dbReference type="GO" id="GO:0006730">
    <property type="term" value="P:one-carbon metabolic process"/>
    <property type="evidence" value="ECO:0007669"/>
    <property type="project" value="UniProtKB-KW"/>
</dbReference>
<dbReference type="GO" id="GO:0006556">
    <property type="term" value="P:S-adenosylmethionine biosynthetic process"/>
    <property type="evidence" value="ECO:0007669"/>
    <property type="project" value="UniProtKB-UniRule"/>
</dbReference>
<dbReference type="CDD" id="cd18079">
    <property type="entry name" value="S-AdoMet_synt"/>
    <property type="match status" value="1"/>
</dbReference>
<dbReference type="FunFam" id="3.30.300.10:FF:000003">
    <property type="entry name" value="S-adenosylmethionine synthase"/>
    <property type="match status" value="1"/>
</dbReference>
<dbReference type="Gene3D" id="3.30.300.10">
    <property type="match status" value="3"/>
</dbReference>
<dbReference type="HAMAP" id="MF_00086">
    <property type="entry name" value="S_AdoMet_synth1"/>
    <property type="match status" value="1"/>
</dbReference>
<dbReference type="InterPro" id="IPR022631">
    <property type="entry name" value="ADOMET_SYNTHASE_CS"/>
</dbReference>
<dbReference type="InterPro" id="IPR022630">
    <property type="entry name" value="S-AdoMet_synt_C"/>
</dbReference>
<dbReference type="InterPro" id="IPR022629">
    <property type="entry name" value="S-AdoMet_synt_central"/>
</dbReference>
<dbReference type="InterPro" id="IPR022628">
    <property type="entry name" value="S-AdoMet_synt_N"/>
</dbReference>
<dbReference type="InterPro" id="IPR002133">
    <property type="entry name" value="S-AdoMet_synthetase"/>
</dbReference>
<dbReference type="InterPro" id="IPR022636">
    <property type="entry name" value="S-AdoMet_synthetase_sfam"/>
</dbReference>
<dbReference type="NCBIfam" id="TIGR01034">
    <property type="entry name" value="metK"/>
    <property type="match status" value="1"/>
</dbReference>
<dbReference type="PANTHER" id="PTHR11964">
    <property type="entry name" value="S-ADENOSYLMETHIONINE SYNTHETASE"/>
    <property type="match status" value="1"/>
</dbReference>
<dbReference type="Pfam" id="PF02773">
    <property type="entry name" value="S-AdoMet_synt_C"/>
    <property type="match status" value="1"/>
</dbReference>
<dbReference type="Pfam" id="PF02772">
    <property type="entry name" value="S-AdoMet_synt_M"/>
    <property type="match status" value="1"/>
</dbReference>
<dbReference type="Pfam" id="PF00438">
    <property type="entry name" value="S-AdoMet_synt_N"/>
    <property type="match status" value="1"/>
</dbReference>
<dbReference type="PIRSF" id="PIRSF000497">
    <property type="entry name" value="MAT"/>
    <property type="match status" value="1"/>
</dbReference>
<dbReference type="SUPFAM" id="SSF55973">
    <property type="entry name" value="S-adenosylmethionine synthetase"/>
    <property type="match status" value="3"/>
</dbReference>
<dbReference type="PROSITE" id="PS00376">
    <property type="entry name" value="ADOMET_SYNTHASE_1"/>
    <property type="match status" value="1"/>
</dbReference>
<dbReference type="PROSITE" id="PS00377">
    <property type="entry name" value="ADOMET_SYNTHASE_2"/>
    <property type="match status" value="1"/>
</dbReference>
<keyword id="KW-0067">ATP-binding</keyword>
<keyword id="KW-0963">Cytoplasm</keyword>
<keyword id="KW-0460">Magnesium</keyword>
<keyword id="KW-0479">Metal-binding</keyword>
<keyword id="KW-0547">Nucleotide-binding</keyword>
<keyword id="KW-0554">One-carbon metabolism</keyword>
<keyword id="KW-0630">Potassium</keyword>
<keyword id="KW-1185">Reference proteome</keyword>
<keyword id="KW-0808">Transferase</keyword>
<protein>
    <recommendedName>
        <fullName evidence="1">S-adenosylmethionine synthase</fullName>
        <shortName evidence="1">AdoMet synthase</shortName>
        <ecNumber evidence="1">2.5.1.6</ecNumber>
    </recommendedName>
    <alternativeName>
        <fullName evidence="1">MAT</fullName>
    </alternativeName>
    <alternativeName>
        <fullName evidence="1">Methionine adenosyltransferase</fullName>
    </alternativeName>
</protein>
<reference key="1">
    <citation type="journal article" date="2004" name="Nat. Biotechnol.">
        <title>Complete sequence and comparative genome analysis of the dairy bacterium Streptococcus thermophilus.</title>
        <authorList>
            <person name="Bolotin A."/>
            <person name="Quinquis B."/>
            <person name="Renault P."/>
            <person name="Sorokin A."/>
            <person name="Ehrlich S.D."/>
            <person name="Kulakauskas S."/>
            <person name="Lapidus A."/>
            <person name="Goltsman E."/>
            <person name="Mazur M."/>
            <person name="Pusch G.D."/>
            <person name="Fonstein M."/>
            <person name="Overbeek R."/>
            <person name="Kyprides N."/>
            <person name="Purnelle B."/>
            <person name="Prozzi D."/>
            <person name="Ngui K."/>
            <person name="Masuy D."/>
            <person name="Hancy F."/>
            <person name="Burteau S."/>
            <person name="Boutry M."/>
            <person name="Delcour J."/>
            <person name="Goffeau A."/>
            <person name="Hols P."/>
        </authorList>
    </citation>
    <scope>NUCLEOTIDE SEQUENCE [LARGE SCALE GENOMIC DNA]</scope>
    <source>
        <strain>ATCC BAA-250 / LMG 18311</strain>
    </source>
</reference>
<name>METK_STRT2</name>
<sequence length="397" mass="42914">MSERKLFTSESVSEGHPDKIADQISDAILDAILAEDPDAHVAAETAVYTGSVHVFGEVSTTAYVDINRVVRDTIAEIGYNNAEYGFAAESVGVHPSLIEQSPDIAQGVNESLEVRGTGDQDSLDLIGAGDQGLMFGFAIDETPEFMPLPVSLSHKLVKKLADLRKSGEISYLRPDAKSQVTVEYDENDQPVRVDTVVISTQHDPEATNDQIRQDVIEKVIKAVIPAEYLDEDTKFFINPTGRFVIGGPQGDSGLTGRKIIVDTYGGYSRHGGGAFSGKDATKVDRSASYAARYIAKNIVAAGLAKKAEVQLAYAIGVANPVSVRVDTFGTATVAERKLESAVRDLFDLRPAGIIQMLDLKRPIYRQTAAYGHMGRTDVDLPWEKLDKVDALKAAVEA</sequence>
<comment type="function">
    <text evidence="1">Catalyzes the formation of S-adenosylmethionine (AdoMet) from methionine and ATP. The overall synthetic reaction is composed of two sequential steps, AdoMet formation and the subsequent tripolyphosphate hydrolysis which occurs prior to release of AdoMet from the enzyme.</text>
</comment>
<comment type="catalytic activity">
    <reaction evidence="1">
        <text>L-methionine + ATP + H2O = S-adenosyl-L-methionine + phosphate + diphosphate</text>
        <dbReference type="Rhea" id="RHEA:21080"/>
        <dbReference type="ChEBI" id="CHEBI:15377"/>
        <dbReference type="ChEBI" id="CHEBI:30616"/>
        <dbReference type="ChEBI" id="CHEBI:33019"/>
        <dbReference type="ChEBI" id="CHEBI:43474"/>
        <dbReference type="ChEBI" id="CHEBI:57844"/>
        <dbReference type="ChEBI" id="CHEBI:59789"/>
        <dbReference type="EC" id="2.5.1.6"/>
    </reaction>
</comment>
<comment type="cofactor">
    <cofactor evidence="1">
        <name>Mg(2+)</name>
        <dbReference type="ChEBI" id="CHEBI:18420"/>
    </cofactor>
    <text evidence="1">Binds 2 divalent ions per subunit.</text>
</comment>
<comment type="cofactor">
    <cofactor evidence="1">
        <name>K(+)</name>
        <dbReference type="ChEBI" id="CHEBI:29103"/>
    </cofactor>
    <text evidence="1">Binds 1 potassium ion per subunit.</text>
</comment>
<comment type="pathway">
    <text evidence="1">Amino-acid biosynthesis; S-adenosyl-L-methionine biosynthesis; S-adenosyl-L-methionine from L-methionine: step 1/1.</text>
</comment>
<comment type="subunit">
    <text evidence="1">Homotetramer; dimer of dimers.</text>
</comment>
<comment type="subcellular location">
    <subcellularLocation>
        <location evidence="1">Cytoplasm</location>
    </subcellularLocation>
</comment>
<comment type="similarity">
    <text evidence="1">Belongs to the AdoMet synthase family.</text>
</comment>
<comment type="sequence caution" evidence="2">
    <conflict type="erroneous initiation">
        <sequence resource="EMBL-CDS" id="AAV60808"/>
    </conflict>
</comment>
<proteinExistence type="inferred from homology"/>
<gene>
    <name evidence="1" type="primary">metK</name>
    <name type="ordered locus">stu1172</name>
</gene>
<feature type="chain" id="PRO_0000241045" description="S-adenosylmethionine synthase">
    <location>
        <begin position="1"/>
        <end position="397"/>
    </location>
</feature>
<feature type="region of interest" description="Flexible loop" evidence="1">
    <location>
        <begin position="100"/>
        <end position="110"/>
    </location>
</feature>
<feature type="binding site" description="in other chain" evidence="1">
    <location>
        <position position="16"/>
    </location>
    <ligand>
        <name>ATP</name>
        <dbReference type="ChEBI" id="CHEBI:30616"/>
        <note>ligand shared between two neighboring subunits</note>
    </ligand>
</feature>
<feature type="binding site" evidence="1">
    <location>
        <position position="18"/>
    </location>
    <ligand>
        <name>Mg(2+)</name>
        <dbReference type="ChEBI" id="CHEBI:18420"/>
    </ligand>
</feature>
<feature type="binding site" evidence="1">
    <location>
        <position position="44"/>
    </location>
    <ligand>
        <name>K(+)</name>
        <dbReference type="ChEBI" id="CHEBI:29103"/>
    </ligand>
</feature>
<feature type="binding site" description="in other chain" evidence="1">
    <location>
        <position position="57"/>
    </location>
    <ligand>
        <name>L-methionine</name>
        <dbReference type="ChEBI" id="CHEBI:57844"/>
        <note>ligand shared between two neighboring subunits</note>
    </ligand>
</feature>
<feature type="binding site" description="in other chain" evidence="1">
    <location>
        <position position="100"/>
    </location>
    <ligand>
        <name>L-methionine</name>
        <dbReference type="ChEBI" id="CHEBI:57844"/>
        <note>ligand shared between two neighboring subunits</note>
    </ligand>
</feature>
<feature type="binding site" description="in other chain" evidence="1">
    <location>
        <begin position="175"/>
        <end position="177"/>
    </location>
    <ligand>
        <name>ATP</name>
        <dbReference type="ChEBI" id="CHEBI:30616"/>
        <note>ligand shared between two neighboring subunits</note>
    </ligand>
</feature>
<feature type="binding site" description="in other chain" evidence="1">
    <location>
        <begin position="242"/>
        <end position="243"/>
    </location>
    <ligand>
        <name>ATP</name>
        <dbReference type="ChEBI" id="CHEBI:30616"/>
        <note>ligand shared between two neighboring subunits</note>
    </ligand>
</feature>
<feature type="binding site" evidence="1">
    <location>
        <position position="251"/>
    </location>
    <ligand>
        <name>ATP</name>
        <dbReference type="ChEBI" id="CHEBI:30616"/>
        <note>ligand shared between two neighboring subunits</note>
    </ligand>
</feature>
<feature type="binding site" evidence="1">
    <location>
        <position position="251"/>
    </location>
    <ligand>
        <name>L-methionine</name>
        <dbReference type="ChEBI" id="CHEBI:57844"/>
        <note>ligand shared between two neighboring subunits</note>
    </ligand>
</feature>
<feature type="binding site" description="in other chain" evidence="1">
    <location>
        <begin position="257"/>
        <end position="258"/>
    </location>
    <ligand>
        <name>ATP</name>
        <dbReference type="ChEBI" id="CHEBI:30616"/>
        <note>ligand shared between two neighboring subunits</note>
    </ligand>
</feature>
<feature type="binding site" evidence="1">
    <location>
        <position position="274"/>
    </location>
    <ligand>
        <name>ATP</name>
        <dbReference type="ChEBI" id="CHEBI:30616"/>
        <note>ligand shared between two neighboring subunits</note>
    </ligand>
</feature>
<feature type="binding site" evidence="1">
    <location>
        <position position="278"/>
    </location>
    <ligand>
        <name>ATP</name>
        <dbReference type="ChEBI" id="CHEBI:30616"/>
        <note>ligand shared between two neighboring subunits</note>
    </ligand>
</feature>
<feature type="binding site" description="in other chain" evidence="1">
    <location>
        <position position="282"/>
    </location>
    <ligand>
        <name>L-methionine</name>
        <dbReference type="ChEBI" id="CHEBI:57844"/>
        <note>ligand shared between two neighboring subunits</note>
    </ligand>
</feature>
<accession>Q5M434</accession>
<organism>
    <name type="scientific">Streptococcus thermophilus (strain ATCC BAA-250 / LMG 18311)</name>
    <dbReference type="NCBI Taxonomy" id="264199"/>
    <lineage>
        <taxon>Bacteria</taxon>
        <taxon>Bacillati</taxon>
        <taxon>Bacillota</taxon>
        <taxon>Bacilli</taxon>
        <taxon>Lactobacillales</taxon>
        <taxon>Streptococcaceae</taxon>
        <taxon>Streptococcus</taxon>
    </lineage>
</organism>